<proteinExistence type="uncertain"/>
<reference key="1">
    <citation type="journal article" date="2002" name="Proc. Natl. Acad. Sci. U.S.A.">
        <title>Extensive mosaic structure revealed by the complete genome sequence of uropathogenic Escherichia coli.</title>
        <authorList>
            <person name="Welch R.A."/>
            <person name="Burland V."/>
            <person name="Plunkett G. III"/>
            <person name="Redford P."/>
            <person name="Roesch P."/>
            <person name="Rasko D."/>
            <person name="Buckles E.L."/>
            <person name="Liou S.-R."/>
            <person name="Boutin A."/>
            <person name="Hackett J."/>
            <person name="Stroud D."/>
            <person name="Mayhew G.F."/>
            <person name="Rose D.J."/>
            <person name="Zhou S."/>
            <person name="Schwartz D.C."/>
            <person name="Perna N.T."/>
            <person name="Mobley H.L.T."/>
            <person name="Donnenberg M.S."/>
            <person name="Blattner F.R."/>
        </authorList>
    </citation>
    <scope>NUCLEOTIDE SEQUENCE [LARGE SCALE GENOMIC DNA]</scope>
    <source>
        <strain>CFT073 / ATCC 700928 / UPEC</strain>
    </source>
</reference>
<sequence length="93" mass="10590">MKNKLKSALSFFTTLSNTVKQANKDIDAAKLKLTTEIAAIGVIKTETETTRFYVDYDDLMLSLLKEAAQKMINTCNEYQKRHGKKTLFEIPEV</sequence>
<name>HLYEL_ECOL6</name>
<gene>
    <name type="ordered locus">c1630</name>
</gene>
<protein>
    <recommendedName>
        <fullName>Putative hemolysin E-like protein</fullName>
    </recommendedName>
</protein>
<evidence type="ECO:0000305" key="1"/>
<feature type="chain" id="PRO_0000083993" description="Putative hemolysin E-like protein">
    <location>
        <begin position="1"/>
        <end position="93"/>
    </location>
</feature>
<keyword id="KW-1185">Reference proteome</keyword>
<dbReference type="EMBL" id="AE014075">
    <property type="protein sequence ID" value="AAN80095.1"/>
    <property type="molecule type" value="Genomic_DNA"/>
</dbReference>
<dbReference type="SMR" id="Q8FI27"/>
<dbReference type="STRING" id="199310.c1630"/>
<dbReference type="KEGG" id="ecc:c1630"/>
<dbReference type="eggNOG" id="ENOG502ZB9A">
    <property type="taxonomic scope" value="Bacteria"/>
</dbReference>
<dbReference type="HOGENOM" id="CLU_191377_0_0_6"/>
<dbReference type="BioCyc" id="ECOL199310:C1630-MONOMER"/>
<dbReference type="Proteomes" id="UP000001410">
    <property type="component" value="Chromosome"/>
</dbReference>
<dbReference type="GO" id="GO:0044179">
    <property type="term" value="P:hemolysis in another organism"/>
    <property type="evidence" value="ECO:0007669"/>
    <property type="project" value="InterPro"/>
</dbReference>
<dbReference type="Gene3D" id="1.20.1170.10">
    <property type="match status" value="1"/>
</dbReference>
<dbReference type="InterPro" id="IPR027018">
    <property type="entry name" value="Hemolysin_E"/>
</dbReference>
<dbReference type="Pfam" id="PF06109">
    <property type="entry name" value="HlyE"/>
    <property type="match status" value="1"/>
</dbReference>
<dbReference type="SUPFAM" id="SSF58100">
    <property type="entry name" value="Bacterial hemolysins"/>
    <property type="match status" value="1"/>
</dbReference>
<organism>
    <name type="scientific">Escherichia coli O6:H1 (strain CFT073 / ATCC 700928 / UPEC)</name>
    <dbReference type="NCBI Taxonomy" id="199310"/>
    <lineage>
        <taxon>Bacteria</taxon>
        <taxon>Pseudomonadati</taxon>
        <taxon>Pseudomonadota</taxon>
        <taxon>Gammaproteobacteria</taxon>
        <taxon>Enterobacterales</taxon>
        <taxon>Enterobacteriaceae</taxon>
        <taxon>Escherichia</taxon>
    </lineage>
</organism>
<accession>Q8FI27</accession>
<comment type="similarity">
    <text evidence="1">Belongs to the hemolysin E family.</text>
</comment>
<comment type="caution">
    <text evidence="1">Could be the product of a pseudogene. Although it is strongly related to the hemolysin E toxin from E.coli K12 strain, it lacks all the N-terminal part of the protein, and it is therefore probably not functional.</text>
</comment>